<comment type="subcellular location">
    <subcellularLocation>
        <location evidence="1">Cell membrane</location>
        <topology evidence="1">Multi-pass membrane protein</topology>
    </subcellularLocation>
</comment>
<comment type="similarity">
    <text evidence="1">Belongs to the UPF0060 family.</text>
</comment>
<gene>
    <name type="ordered locus">Cbei_2176</name>
</gene>
<proteinExistence type="inferred from homology"/>
<protein>
    <recommendedName>
        <fullName evidence="1">UPF0060 membrane protein Cbei_2176</fullName>
    </recommendedName>
</protein>
<evidence type="ECO:0000255" key="1">
    <source>
        <dbReference type="HAMAP-Rule" id="MF_00010"/>
    </source>
</evidence>
<keyword id="KW-1003">Cell membrane</keyword>
<keyword id="KW-0472">Membrane</keyword>
<keyword id="KW-0812">Transmembrane</keyword>
<keyword id="KW-1133">Transmembrane helix</keyword>
<dbReference type="EMBL" id="CP000721">
    <property type="protein sequence ID" value="ABR34343.1"/>
    <property type="molecule type" value="Genomic_DNA"/>
</dbReference>
<dbReference type="RefSeq" id="WP_012058402.1">
    <property type="nucleotide sequence ID" value="NC_009617.1"/>
</dbReference>
<dbReference type="SMR" id="A6LVG3"/>
<dbReference type="KEGG" id="cbe:Cbei_2176"/>
<dbReference type="eggNOG" id="COG1742">
    <property type="taxonomic scope" value="Bacteria"/>
</dbReference>
<dbReference type="HOGENOM" id="CLU_117653_0_1_9"/>
<dbReference type="Proteomes" id="UP000000565">
    <property type="component" value="Chromosome"/>
</dbReference>
<dbReference type="GO" id="GO:0005886">
    <property type="term" value="C:plasma membrane"/>
    <property type="evidence" value="ECO:0007669"/>
    <property type="project" value="UniProtKB-SubCell"/>
</dbReference>
<dbReference type="HAMAP" id="MF_00010">
    <property type="entry name" value="UPF0060"/>
    <property type="match status" value="1"/>
</dbReference>
<dbReference type="InterPro" id="IPR003844">
    <property type="entry name" value="UPF0060"/>
</dbReference>
<dbReference type="NCBIfam" id="NF002586">
    <property type="entry name" value="PRK02237.1"/>
    <property type="match status" value="1"/>
</dbReference>
<dbReference type="PANTHER" id="PTHR36116">
    <property type="entry name" value="UPF0060 MEMBRANE PROTEIN YNFA"/>
    <property type="match status" value="1"/>
</dbReference>
<dbReference type="PANTHER" id="PTHR36116:SF1">
    <property type="entry name" value="UPF0060 MEMBRANE PROTEIN YNFA"/>
    <property type="match status" value="1"/>
</dbReference>
<dbReference type="Pfam" id="PF02694">
    <property type="entry name" value="UPF0060"/>
    <property type="match status" value="1"/>
</dbReference>
<dbReference type="SUPFAM" id="SSF103481">
    <property type="entry name" value="Multidrug resistance efflux transporter EmrE"/>
    <property type="match status" value="1"/>
</dbReference>
<name>Y2176_CLOB8</name>
<sequence length="111" mass="12220">MEIIKSILYFILAGIFEIGGGYLIWIWLRDGKSYLYGVIGAVILILYGIIPTLQPSNADFGKVYAAYGGIFIVMSILWGWKIDNIVPDKFDLIGGCIALVGVIVIMYAPRG</sequence>
<organism>
    <name type="scientific">Clostridium beijerinckii (strain ATCC 51743 / NCIMB 8052)</name>
    <name type="common">Clostridium acetobutylicum</name>
    <dbReference type="NCBI Taxonomy" id="290402"/>
    <lineage>
        <taxon>Bacteria</taxon>
        <taxon>Bacillati</taxon>
        <taxon>Bacillota</taxon>
        <taxon>Clostridia</taxon>
        <taxon>Eubacteriales</taxon>
        <taxon>Clostridiaceae</taxon>
        <taxon>Clostridium</taxon>
    </lineage>
</organism>
<accession>A6LVG3</accession>
<feature type="chain" id="PRO_1000073927" description="UPF0060 membrane protein Cbei_2176">
    <location>
        <begin position="1"/>
        <end position="111"/>
    </location>
</feature>
<feature type="transmembrane region" description="Helical" evidence="1">
    <location>
        <begin position="7"/>
        <end position="27"/>
    </location>
</feature>
<feature type="transmembrane region" description="Helical" evidence="1">
    <location>
        <begin position="33"/>
        <end position="53"/>
    </location>
</feature>
<feature type="transmembrane region" description="Helical" evidence="1">
    <location>
        <begin position="60"/>
        <end position="80"/>
    </location>
</feature>
<feature type="transmembrane region" description="Helical" evidence="1">
    <location>
        <begin position="85"/>
        <end position="105"/>
    </location>
</feature>
<reference key="1">
    <citation type="submission" date="2007-06" db="EMBL/GenBank/DDBJ databases">
        <title>Complete sequence of Clostridium beijerinckii NCIMB 8052.</title>
        <authorList>
            <consortium name="US DOE Joint Genome Institute"/>
            <person name="Copeland A."/>
            <person name="Lucas S."/>
            <person name="Lapidus A."/>
            <person name="Barry K."/>
            <person name="Detter J.C."/>
            <person name="Glavina del Rio T."/>
            <person name="Hammon N."/>
            <person name="Israni S."/>
            <person name="Dalin E."/>
            <person name="Tice H."/>
            <person name="Pitluck S."/>
            <person name="Sims D."/>
            <person name="Brettin T."/>
            <person name="Bruce D."/>
            <person name="Tapia R."/>
            <person name="Brainard J."/>
            <person name="Schmutz J."/>
            <person name="Larimer F."/>
            <person name="Land M."/>
            <person name="Hauser L."/>
            <person name="Kyrpides N."/>
            <person name="Mikhailova N."/>
            <person name="Bennet G."/>
            <person name="Cann I."/>
            <person name="Chen J.-S."/>
            <person name="Contreras A.L."/>
            <person name="Jones D."/>
            <person name="Kashket E."/>
            <person name="Mitchell W."/>
            <person name="Stoddard S."/>
            <person name="Schwarz W."/>
            <person name="Qureshi N."/>
            <person name="Young M."/>
            <person name="Shi Z."/>
            <person name="Ezeji T."/>
            <person name="White B."/>
            <person name="Blaschek H."/>
            <person name="Richardson P."/>
        </authorList>
    </citation>
    <scope>NUCLEOTIDE SEQUENCE [LARGE SCALE GENOMIC DNA]</scope>
    <source>
        <strain>ATCC 51743 / NCIMB 8052</strain>
    </source>
</reference>